<gene>
    <name evidence="1" type="primary">betA</name>
    <name type="ordered locus">ESA_02049</name>
</gene>
<keyword id="KW-0274">FAD</keyword>
<keyword id="KW-0285">Flavoprotein</keyword>
<keyword id="KW-0520">NAD</keyword>
<keyword id="KW-0560">Oxidoreductase</keyword>
<keyword id="KW-1185">Reference proteome</keyword>
<feature type="chain" id="PRO_1000046563" description="Oxygen-dependent choline dehydrogenase">
    <location>
        <begin position="1"/>
        <end position="559"/>
    </location>
</feature>
<feature type="active site" description="Proton acceptor" evidence="1">
    <location>
        <position position="473"/>
    </location>
</feature>
<feature type="binding site" evidence="1">
    <location>
        <begin position="4"/>
        <end position="33"/>
    </location>
    <ligand>
        <name>FAD</name>
        <dbReference type="ChEBI" id="CHEBI:57692"/>
    </ligand>
</feature>
<name>BETA_CROS8</name>
<comment type="function">
    <text evidence="1">Involved in the biosynthesis of the osmoprotectant glycine betaine. Catalyzes the oxidation of choline to betaine aldehyde and betaine aldehyde to glycine betaine at the same rate.</text>
</comment>
<comment type="catalytic activity">
    <reaction evidence="1">
        <text>choline + A = betaine aldehyde + AH2</text>
        <dbReference type="Rhea" id="RHEA:17433"/>
        <dbReference type="ChEBI" id="CHEBI:13193"/>
        <dbReference type="ChEBI" id="CHEBI:15354"/>
        <dbReference type="ChEBI" id="CHEBI:15710"/>
        <dbReference type="ChEBI" id="CHEBI:17499"/>
        <dbReference type="EC" id="1.1.99.1"/>
    </reaction>
</comment>
<comment type="catalytic activity">
    <reaction evidence="1">
        <text>betaine aldehyde + NAD(+) + H2O = glycine betaine + NADH + 2 H(+)</text>
        <dbReference type="Rhea" id="RHEA:15305"/>
        <dbReference type="ChEBI" id="CHEBI:15377"/>
        <dbReference type="ChEBI" id="CHEBI:15378"/>
        <dbReference type="ChEBI" id="CHEBI:15710"/>
        <dbReference type="ChEBI" id="CHEBI:17750"/>
        <dbReference type="ChEBI" id="CHEBI:57540"/>
        <dbReference type="ChEBI" id="CHEBI:57945"/>
        <dbReference type="EC" id="1.2.1.8"/>
    </reaction>
</comment>
<comment type="cofactor">
    <cofactor evidence="1">
        <name>FAD</name>
        <dbReference type="ChEBI" id="CHEBI:57692"/>
    </cofactor>
</comment>
<comment type="pathway">
    <text evidence="1">Amine and polyamine biosynthesis; betaine biosynthesis via choline pathway; betaine aldehyde from choline (cytochrome c reductase route): step 1/1.</text>
</comment>
<comment type="similarity">
    <text evidence="1">Belongs to the GMC oxidoreductase family.</text>
</comment>
<accession>A7MFA8</accession>
<sequence>MEFDYIIIGAGSAGNVLATRLTEDSDVTVLLLEAGGPDYRFDFRTQMPAALAYPLQGKRYNWAYETEPEPYMNNRRMECGRGKGLGGSSLINGMCYIRGNAMDLDNWAQQPGLERWTYLDCLPYYRKSETRDIGANDYHGGDGPVSITTCKPGNNPLFAAMIEAGVQAGYPRTDDLNGYQQEGFGPMDRFVTPKGRRSSTARGYLDTAKQRPNLKIITHATTDRILFENKRAVGVAYLHGASNTPQEVHARREVLLCAGAIASPQILQRSGVGNAELLKQFDIPVVHDLPGVGENLQDHLEMYLQYECKEPVSLYPALKWWNQPKIGAEWLFNGTGIGASNHFEGGGFIRSREEFAWPNIQYHFLPVAINYNGSNAVEAHGFQCHVGSMRSPSRGHVRIKSRDPHQHPAILFNYMSHEQDWQEFRDAIRITRQIINQPALDKFRGREISPGIDCQTDEQLDEFVRNHAETAYHPCGTCKMGSDEMAVVDDEGRVHGLEGLRVVDASIMPLIITGNLNATTIMIGEKIADNIRGRTPLPRSTASYFVAGDRPVRGEPLRP</sequence>
<proteinExistence type="inferred from homology"/>
<dbReference type="EC" id="1.1.99.1" evidence="1"/>
<dbReference type="EC" id="1.2.1.8" evidence="1"/>
<dbReference type="EMBL" id="CP000783">
    <property type="protein sequence ID" value="ABU77300.1"/>
    <property type="molecule type" value="Genomic_DNA"/>
</dbReference>
<dbReference type="RefSeq" id="WP_012124948.1">
    <property type="nucleotide sequence ID" value="NC_009778.1"/>
</dbReference>
<dbReference type="SMR" id="A7MFA8"/>
<dbReference type="KEGG" id="esa:ESA_02049"/>
<dbReference type="PATRIC" id="fig|290339.8.peg.1826"/>
<dbReference type="HOGENOM" id="CLU_002865_7_1_6"/>
<dbReference type="UniPathway" id="UPA00529">
    <property type="reaction ID" value="UER00385"/>
</dbReference>
<dbReference type="Proteomes" id="UP000000260">
    <property type="component" value="Chromosome"/>
</dbReference>
<dbReference type="GO" id="GO:0016020">
    <property type="term" value="C:membrane"/>
    <property type="evidence" value="ECO:0007669"/>
    <property type="project" value="TreeGrafter"/>
</dbReference>
<dbReference type="GO" id="GO:0008802">
    <property type="term" value="F:betaine-aldehyde dehydrogenase (NAD+) activity"/>
    <property type="evidence" value="ECO:0007669"/>
    <property type="project" value="UniProtKB-EC"/>
</dbReference>
<dbReference type="GO" id="GO:0008812">
    <property type="term" value="F:choline dehydrogenase activity"/>
    <property type="evidence" value="ECO:0007669"/>
    <property type="project" value="UniProtKB-UniRule"/>
</dbReference>
<dbReference type="GO" id="GO:0050660">
    <property type="term" value="F:flavin adenine dinucleotide binding"/>
    <property type="evidence" value="ECO:0007669"/>
    <property type="project" value="InterPro"/>
</dbReference>
<dbReference type="GO" id="GO:0019285">
    <property type="term" value="P:glycine betaine biosynthetic process from choline"/>
    <property type="evidence" value="ECO:0007669"/>
    <property type="project" value="UniProtKB-UniRule"/>
</dbReference>
<dbReference type="Gene3D" id="3.50.50.60">
    <property type="entry name" value="FAD/NAD(P)-binding domain"/>
    <property type="match status" value="1"/>
</dbReference>
<dbReference type="Gene3D" id="3.30.560.10">
    <property type="entry name" value="Glucose Oxidase, domain 3"/>
    <property type="match status" value="1"/>
</dbReference>
<dbReference type="HAMAP" id="MF_00750">
    <property type="entry name" value="Choline_dehydrogen"/>
    <property type="match status" value="1"/>
</dbReference>
<dbReference type="InterPro" id="IPR011533">
    <property type="entry name" value="BetA"/>
</dbReference>
<dbReference type="InterPro" id="IPR036188">
    <property type="entry name" value="FAD/NAD-bd_sf"/>
</dbReference>
<dbReference type="InterPro" id="IPR012132">
    <property type="entry name" value="GMC_OxRdtase"/>
</dbReference>
<dbReference type="InterPro" id="IPR000172">
    <property type="entry name" value="GMC_OxRdtase_N"/>
</dbReference>
<dbReference type="InterPro" id="IPR007867">
    <property type="entry name" value="GMC_OxRtase_C"/>
</dbReference>
<dbReference type="NCBIfam" id="TIGR01810">
    <property type="entry name" value="betA"/>
    <property type="match status" value="1"/>
</dbReference>
<dbReference type="NCBIfam" id="NF002550">
    <property type="entry name" value="PRK02106.1"/>
    <property type="match status" value="1"/>
</dbReference>
<dbReference type="PANTHER" id="PTHR11552:SF147">
    <property type="entry name" value="CHOLINE DEHYDROGENASE, MITOCHONDRIAL"/>
    <property type="match status" value="1"/>
</dbReference>
<dbReference type="PANTHER" id="PTHR11552">
    <property type="entry name" value="GLUCOSE-METHANOL-CHOLINE GMC OXIDOREDUCTASE"/>
    <property type="match status" value="1"/>
</dbReference>
<dbReference type="Pfam" id="PF05199">
    <property type="entry name" value="GMC_oxred_C"/>
    <property type="match status" value="1"/>
</dbReference>
<dbReference type="Pfam" id="PF00732">
    <property type="entry name" value="GMC_oxred_N"/>
    <property type="match status" value="1"/>
</dbReference>
<dbReference type="PIRSF" id="PIRSF000137">
    <property type="entry name" value="Alcohol_oxidase"/>
    <property type="match status" value="1"/>
</dbReference>
<dbReference type="SUPFAM" id="SSF54373">
    <property type="entry name" value="FAD-linked reductases, C-terminal domain"/>
    <property type="match status" value="1"/>
</dbReference>
<dbReference type="SUPFAM" id="SSF51905">
    <property type="entry name" value="FAD/NAD(P)-binding domain"/>
    <property type="match status" value="1"/>
</dbReference>
<dbReference type="PROSITE" id="PS00623">
    <property type="entry name" value="GMC_OXRED_1"/>
    <property type="match status" value="1"/>
</dbReference>
<dbReference type="PROSITE" id="PS00624">
    <property type="entry name" value="GMC_OXRED_2"/>
    <property type="match status" value="1"/>
</dbReference>
<evidence type="ECO:0000255" key="1">
    <source>
        <dbReference type="HAMAP-Rule" id="MF_00750"/>
    </source>
</evidence>
<organism>
    <name type="scientific">Cronobacter sakazakii (strain ATCC BAA-894)</name>
    <name type="common">Enterobacter sakazakii</name>
    <dbReference type="NCBI Taxonomy" id="290339"/>
    <lineage>
        <taxon>Bacteria</taxon>
        <taxon>Pseudomonadati</taxon>
        <taxon>Pseudomonadota</taxon>
        <taxon>Gammaproteobacteria</taxon>
        <taxon>Enterobacterales</taxon>
        <taxon>Enterobacteriaceae</taxon>
        <taxon>Cronobacter</taxon>
    </lineage>
</organism>
<reference key="1">
    <citation type="journal article" date="2010" name="PLoS ONE">
        <title>Genome sequence of Cronobacter sakazakii BAA-894 and comparative genomic hybridization analysis with other Cronobacter species.</title>
        <authorList>
            <person name="Kucerova E."/>
            <person name="Clifton S.W."/>
            <person name="Xia X.Q."/>
            <person name="Long F."/>
            <person name="Porwollik S."/>
            <person name="Fulton L."/>
            <person name="Fronick C."/>
            <person name="Minx P."/>
            <person name="Kyung K."/>
            <person name="Warren W."/>
            <person name="Fulton R."/>
            <person name="Feng D."/>
            <person name="Wollam A."/>
            <person name="Shah N."/>
            <person name="Bhonagiri V."/>
            <person name="Nash W.E."/>
            <person name="Hallsworth-Pepin K."/>
            <person name="Wilson R.K."/>
            <person name="McClelland M."/>
            <person name="Forsythe S.J."/>
        </authorList>
    </citation>
    <scope>NUCLEOTIDE SEQUENCE [LARGE SCALE GENOMIC DNA]</scope>
    <source>
        <strain>ATCC BAA-894</strain>
    </source>
</reference>
<protein>
    <recommendedName>
        <fullName evidence="1">Oxygen-dependent choline dehydrogenase</fullName>
        <shortName evidence="1">CDH</shortName>
        <shortName evidence="1">CHD</shortName>
        <ecNumber evidence="1">1.1.99.1</ecNumber>
    </recommendedName>
    <alternativeName>
        <fullName evidence="1">Betaine aldehyde dehydrogenase</fullName>
        <shortName evidence="1">BADH</shortName>
        <ecNumber evidence="1">1.2.1.8</ecNumber>
    </alternativeName>
</protein>